<sequence length="398" mass="44513">MSVDKIVLAYSGGLDTSVILKWLANEYECPVVAYSANIGQIEDWDAVKEKGMATGADKVIVSDLQKEFVEDYIFPAFRASAIYEGTYLLGTSLARPLISKEQVRIAHAEGANAVSHGATGKGNDQVRFELGYIGLDPSLQIIAPWRTWDLNSRTRLEEYAKQHNIPVPTTKKNPYSSDENLLHISFEGGILESPWNEPDPDMFKLTVSPEMAPDKPTYLEITFQNGDPIALDGVAMEPLELFRALNKVAGENAVGRLDLVENRFVGMKSRGVYETPGGTLLYHAHRDLETICLDREVMKIRDSLVPRYAELIYNGFWFSPERELLQMTMDTAQKTVSGVVRMKLYKGNCFSVGRKSDQSLYKEDFATFEADDVYDQGDATGFIRLNGLRLKINALQGK</sequence>
<comment type="catalytic activity">
    <reaction evidence="1">
        <text>L-citrulline + L-aspartate + ATP = 2-(N(omega)-L-arginino)succinate + AMP + diphosphate + H(+)</text>
        <dbReference type="Rhea" id="RHEA:10932"/>
        <dbReference type="ChEBI" id="CHEBI:15378"/>
        <dbReference type="ChEBI" id="CHEBI:29991"/>
        <dbReference type="ChEBI" id="CHEBI:30616"/>
        <dbReference type="ChEBI" id="CHEBI:33019"/>
        <dbReference type="ChEBI" id="CHEBI:57472"/>
        <dbReference type="ChEBI" id="CHEBI:57743"/>
        <dbReference type="ChEBI" id="CHEBI:456215"/>
        <dbReference type="EC" id="6.3.4.5"/>
    </reaction>
</comment>
<comment type="pathway">
    <text evidence="1">Amino-acid biosynthesis; L-arginine biosynthesis; L-arginine from L-ornithine and carbamoyl phosphate: step 2/3.</text>
</comment>
<comment type="subunit">
    <text evidence="1">Homotetramer.</text>
</comment>
<comment type="subcellular location">
    <subcellularLocation>
        <location evidence="1">Cytoplasm</location>
    </subcellularLocation>
</comment>
<comment type="similarity">
    <text evidence="1">Belongs to the argininosuccinate synthase family. Type 1 subfamily.</text>
</comment>
<dbReference type="EC" id="6.3.4.5" evidence="1"/>
<dbReference type="EMBL" id="CR522870">
    <property type="protein sequence ID" value="CAG35165.1"/>
    <property type="molecule type" value="Genomic_DNA"/>
</dbReference>
<dbReference type="RefSeq" id="WP_011187681.1">
    <property type="nucleotide sequence ID" value="NC_006138.1"/>
</dbReference>
<dbReference type="SMR" id="Q6AR59"/>
<dbReference type="STRING" id="177439.DP0436"/>
<dbReference type="KEGG" id="dps:DP0436"/>
<dbReference type="eggNOG" id="COG0137">
    <property type="taxonomic scope" value="Bacteria"/>
</dbReference>
<dbReference type="HOGENOM" id="CLU_032784_4_2_7"/>
<dbReference type="OrthoDB" id="9801641at2"/>
<dbReference type="UniPathway" id="UPA00068">
    <property type="reaction ID" value="UER00113"/>
</dbReference>
<dbReference type="Proteomes" id="UP000000602">
    <property type="component" value="Chromosome"/>
</dbReference>
<dbReference type="GO" id="GO:0005737">
    <property type="term" value="C:cytoplasm"/>
    <property type="evidence" value="ECO:0007669"/>
    <property type="project" value="UniProtKB-SubCell"/>
</dbReference>
<dbReference type="GO" id="GO:0004055">
    <property type="term" value="F:argininosuccinate synthase activity"/>
    <property type="evidence" value="ECO:0007669"/>
    <property type="project" value="UniProtKB-UniRule"/>
</dbReference>
<dbReference type="GO" id="GO:0005524">
    <property type="term" value="F:ATP binding"/>
    <property type="evidence" value="ECO:0007669"/>
    <property type="project" value="UniProtKB-UniRule"/>
</dbReference>
<dbReference type="GO" id="GO:0000053">
    <property type="term" value="P:argininosuccinate metabolic process"/>
    <property type="evidence" value="ECO:0007669"/>
    <property type="project" value="TreeGrafter"/>
</dbReference>
<dbReference type="GO" id="GO:0006526">
    <property type="term" value="P:L-arginine biosynthetic process"/>
    <property type="evidence" value="ECO:0007669"/>
    <property type="project" value="UniProtKB-UniRule"/>
</dbReference>
<dbReference type="GO" id="GO:0000050">
    <property type="term" value="P:urea cycle"/>
    <property type="evidence" value="ECO:0007669"/>
    <property type="project" value="TreeGrafter"/>
</dbReference>
<dbReference type="CDD" id="cd01999">
    <property type="entry name" value="ASS"/>
    <property type="match status" value="1"/>
</dbReference>
<dbReference type="FunFam" id="3.40.50.620:FF:000019">
    <property type="entry name" value="Argininosuccinate synthase"/>
    <property type="match status" value="1"/>
</dbReference>
<dbReference type="FunFam" id="3.90.1260.10:FF:000007">
    <property type="entry name" value="Argininosuccinate synthase"/>
    <property type="match status" value="1"/>
</dbReference>
<dbReference type="Gene3D" id="3.90.1260.10">
    <property type="entry name" value="Argininosuccinate synthetase, chain A, domain 2"/>
    <property type="match status" value="1"/>
</dbReference>
<dbReference type="Gene3D" id="3.40.50.620">
    <property type="entry name" value="HUPs"/>
    <property type="match status" value="1"/>
</dbReference>
<dbReference type="Gene3D" id="1.20.5.470">
    <property type="entry name" value="Single helix bin"/>
    <property type="match status" value="1"/>
</dbReference>
<dbReference type="HAMAP" id="MF_00005">
    <property type="entry name" value="Arg_succ_synth_type1"/>
    <property type="match status" value="1"/>
</dbReference>
<dbReference type="InterPro" id="IPR048268">
    <property type="entry name" value="Arginosuc_syn_C"/>
</dbReference>
<dbReference type="InterPro" id="IPR048267">
    <property type="entry name" value="Arginosuc_syn_N"/>
</dbReference>
<dbReference type="InterPro" id="IPR001518">
    <property type="entry name" value="Arginosuc_synth"/>
</dbReference>
<dbReference type="InterPro" id="IPR018223">
    <property type="entry name" value="Arginosuc_synth_CS"/>
</dbReference>
<dbReference type="InterPro" id="IPR023434">
    <property type="entry name" value="Arginosuc_synth_type_1_subfam"/>
</dbReference>
<dbReference type="InterPro" id="IPR024074">
    <property type="entry name" value="AS_cat/multimer_dom_body"/>
</dbReference>
<dbReference type="InterPro" id="IPR014729">
    <property type="entry name" value="Rossmann-like_a/b/a_fold"/>
</dbReference>
<dbReference type="NCBIfam" id="TIGR00032">
    <property type="entry name" value="argG"/>
    <property type="match status" value="1"/>
</dbReference>
<dbReference type="NCBIfam" id="NF001770">
    <property type="entry name" value="PRK00509.1"/>
    <property type="match status" value="1"/>
</dbReference>
<dbReference type="PANTHER" id="PTHR11587">
    <property type="entry name" value="ARGININOSUCCINATE SYNTHASE"/>
    <property type="match status" value="1"/>
</dbReference>
<dbReference type="PANTHER" id="PTHR11587:SF2">
    <property type="entry name" value="ARGININOSUCCINATE SYNTHASE"/>
    <property type="match status" value="1"/>
</dbReference>
<dbReference type="Pfam" id="PF20979">
    <property type="entry name" value="Arginosuc_syn_C"/>
    <property type="match status" value="1"/>
</dbReference>
<dbReference type="Pfam" id="PF00764">
    <property type="entry name" value="Arginosuc_synth"/>
    <property type="match status" value="1"/>
</dbReference>
<dbReference type="SUPFAM" id="SSF52402">
    <property type="entry name" value="Adenine nucleotide alpha hydrolases-like"/>
    <property type="match status" value="1"/>
</dbReference>
<dbReference type="SUPFAM" id="SSF69864">
    <property type="entry name" value="Argininosuccinate synthetase, C-terminal domain"/>
    <property type="match status" value="1"/>
</dbReference>
<dbReference type="PROSITE" id="PS00564">
    <property type="entry name" value="ARGININOSUCCIN_SYN_1"/>
    <property type="match status" value="1"/>
</dbReference>
<dbReference type="PROSITE" id="PS00565">
    <property type="entry name" value="ARGININOSUCCIN_SYN_2"/>
    <property type="match status" value="1"/>
</dbReference>
<protein>
    <recommendedName>
        <fullName evidence="1">Argininosuccinate synthase</fullName>
        <ecNumber evidence="1">6.3.4.5</ecNumber>
    </recommendedName>
    <alternativeName>
        <fullName evidence="1">Citrulline--aspartate ligase</fullName>
    </alternativeName>
</protein>
<evidence type="ECO:0000255" key="1">
    <source>
        <dbReference type="HAMAP-Rule" id="MF_00005"/>
    </source>
</evidence>
<accession>Q6AR59</accession>
<reference key="1">
    <citation type="journal article" date="2004" name="Environ. Microbiol.">
        <title>The genome of Desulfotalea psychrophila, a sulfate-reducing bacterium from permanently cold Arctic sediments.</title>
        <authorList>
            <person name="Rabus R."/>
            <person name="Ruepp A."/>
            <person name="Frickey T."/>
            <person name="Rattei T."/>
            <person name="Fartmann B."/>
            <person name="Stark M."/>
            <person name="Bauer M."/>
            <person name="Zibat A."/>
            <person name="Lombardot T."/>
            <person name="Becker I."/>
            <person name="Amann J."/>
            <person name="Gellner K."/>
            <person name="Teeling H."/>
            <person name="Leuschner W.D."/>
            <person name="Gloeckner F.-O."/>
            <person name="Lupas A.N."/>
            <person name="Amann R."/>
            <person name="Klenk H.-P."/>
        </authorList>
    </citation>
    <scope>NUCLEOTIDE SEQUENCE [LARGE SCALE GENOMIC DNA]</scope>
    <source>
        <strain>DSM 12343 / LSv54</strain>
    </source>
</reference>
<organism>
    <name type="scientific">Desulfotalea psychrophila (strain LSv54 / DSM 12343)</name>
    <dbReference type="NCBI Taxonomy" id="177439"/>
    <lineage>
        <taxon>Bacteria</taxon>
        <taxon>Pseudomonadati</taxon>
        <taxon>Thermodesulfobacteriota</taxon>
        <taxon>Desulfobulbia</taxon>
        <taxon>Desulfobulbales</taxon>
        <taxon>Desulfocapsaceae</taxon>
        <taxon>Desulfotalea</taxon>
    </lineage>
</organism>
<name>ASSY_DESPS</name>
<feature type="chain" id="PRO_0000148592" description="Argininosuccinate synthase">
    <location>
        <begin position="1"/>
        <end position="398"/>
    </location>
</feature>
<feature type="binding site" evidence="1">
    <location>
        <begin position="9"/>
        <end position="17"/>
    </location>
    <ligand>
        <name>ATP</name>
        <dbReference type="ChEBI" id="CHEBI:30616"/>
    </ligand>
</feature>
<feature type="binding site" evidence="1">
    <location>
        <position position="36"/>
    </location>
    <ligand>
        <name>ATP</name>
        <dbReference type="ChEBI" id="CHEBI:30616"/>
    </ligand>
</feature>
<feature type="binding site" evidence="1">
    <location>
        <position position="87"/>
    </location>
    <ligand>
        <name>L-citrulline</name>
        <dbReference type="ChEBI" id="CHEBI:57743"/>
    </ligand>
</feature>
<feature type="binding site" evidence="1">
    <location>
        <position position="92"/>
    </location>
    <ligand>
        <name>L-citrulline</name>
        <dbReference type="ChEBI" id="CHEBI:57743"/>
    </ligand>
</feature>
<feature type="binding site" evidence="1">
    <location>
        <position position="117"/>
    </location>
    <ligand>
        <name>ATP</name>
        <dbReference type="ChEBI" id="CHEBI:30616"/>
    </ligand>
</feature>
<feature type="binding site" evidence="1">
    <location>
        <position position="119"/>
    </location>
    <ligand>
        <name>L-aspartate</name>
        <dbReference type="ChEBI" id="CHEBI:29991"/>
    </ligand>
</feature>
<feature type="binding site" evidence="1">
    <location>
        <position position="123"/>
    </location>
    <ligand>
        <name>L-aspartate</name>
        <dbReference type="ChEBI" id="CHEBI:29991"/>
    </ligand>
</feature>
<feature type="binding site" evidence="1">
    <location>
        <position position="123"/>
    </location>
    <ligand>
        <name>L-citrulline</name>
        <dbReference type="ChEBI" id="CHEBI:57743"/>
    </ligand>
</feature>
<feature type="binding site" evidence="1">
    <location>
        <position position="124"/>
    </location>
    <ligand>
        <name>L-aspartate</name>
        <dbReference type="ChEBI" id="CHEBI:29991"/>
    </ligand>
</feature>
<feature type="binding site" evidence="1">
    <location>
        <position position="127"/>
    </location>
    <ligand>
        <name>L-citrulline</name>
        <dbReference type="ChEBI" id="CHEBI:57743"/>
    </ligand>
</feature>
<feature type="binding site" evidence="1">
    <location>
        <position position="176"/>
    </location>
    <ligand>
        <name>L-citrulline</name>
        <dbReference type="ChEBI" id="CHEBI:57743"/>
    </ligand>
</feature>
<feature type="binding site" evidence="1">
    <location>
        <position position="185"/>
    </location>
    <ligand>
        <name>L-citrulline</name>
        <dbReference type="ChEBI" id="CHEBI:57743"/>
    </ligand>
</feature>
<feature type="binding site" evidence="1">
    <location>
        <position position="261"/>
    </location>
    <ligand>
        <name>L-citrulline</name>
        <dbReference type="ChEBI" id="CHEBI:57743"/>
    </ligand>
</feature>
<feature type="binding site" evidence="1">
    <location>
        <position position="273"/>
    </location>
    <ligand>
        <name>L-citrulline</name>
        <dbReference type="ChEBI" id="CHEBI:57743"/>
    </ligand>
</feature>
<proteinExistence type="inferred from homology"/>
<gene>
    <name evidence="1" type="primary">argG</name>
    <name type="ordered locus">DP0436</name>
</gene>
<keyword id="KW-0028">Amino-acid biosynthesis</keyword>
<keyword id="KW-0055">Arginine biosynthesis</keyword>
<keyword id="KW-0067">ATP-binding</keyword>
<keyword id="KW-0963">Cytoplasm</keyword>
<keyword id="KW-0436">Ligase</keyword>
<keyword id="KW-0547">Nucleotide-binding</keyword>
<keyword id="KW-1185">Reference proteome</keyword>